<dbReference type="EC" id="6.3.4.2" evidence="1"/>
<dbReference type="EMBL" id="AM039952">
    <property type="protein sequence ID" value="CAJ23426.1"/>
    <property type="molecule type" value="Genomic_DNA"/>
</dbReference>
<dbReference type="RefSeq" id="WP_011347097.1">
    <property type="nucleotide sequence ID" value="NZ_CP017190.1"/>
</dbReference>
<dbReference type="SMR" id="Q3BUT3"/>
<dbReference type="STRING" id="456327.BJD11_13800"/>
<dbReference type="MEROPS" id="C26.964"/>
<dbReference type="KEGG" id="xcv:XCV1749"/>
<dbReference type="eggNOG" id="COG0504">
    <property type="taxonomic scope" value="Bacteria"/>
</dbReference>
<dbReference type="HOGENOM" id="CLU_011675_5_0_6"/>
<dbReference type="UniPathway" id="UPA00159">
    <property type="reaction ID" value="UER00277"/>
</dbReference>
<dbReference type="Proteomes" id="UP000007069">
    <property type="component" value="Chromosome"/>
</dbReference>
<dbReference type="GO" id="GO:0005829">
    <property type="term" value="C:cytosol"/>
    <property type="evidence" value="ECO:0007669"/>
    <property type="project" value="TreeGrafter"/>
</dbReference>
<dbReference type="GO" id="GO:0005524">
    <property type="term" value="F:ATP binding"/>
    <property type="evidence" value="ECO:0007669"/>
    <property type="project" value="UniProtKB-KW"/>
</dbReference>
<dbReference type="GO" id="GO:0003883">
    <property type="term" value="F:CTP synthase activity"/>
    <property type="evidence" value="ECO:0007669"/>
    <property type="project" value="UniProtKB-UniRule"/>
</dbReference>
<dbReference type="GO" id="GO:0004359">
    <property type="term" value="F:glutaminase activity"/>
    <property type="evidence" value="ECO:0007669"/>
    <property type="project" value="RHEA"/>
</dbReference>
<dbReference type="GO" id="GO:0042802">
    <property type="term" value="F:identical protein binding"/>
    <property type="evidence" value="ECO:0007669"/>
    <property type="project" value="TreeGrafter"/>
</dbReference>
<dbReference type="GO" id="GO:0046872">
    <property type="term" value="F:metal ion binding"/>
    <property type="evidence" value="ECO:0007669"/>
    <property type="project" value="UniProtKB-KW"/>
</dbReference>
<dbReference type="GO" id="GO:0044210">
    <property type="term" value="P:'de novo' CTP biosynthetic process"/>
    <property type="evidence" value="ECO:0007669"/>
    <property type="project" value="UniProtKB-UniRule"/>
</dbReference>
<dbReference type="GO" id="GO:0019856">
    <property type="term" value="P:pyrimidine nucleobase biosynthetic process"/>
    <property type="evidence" value="ECO:0007669"/>
    <property type="project" value="TreeGrafter"/>
</dbReference>
<dbReference type="CDD" id="cd03113">
    <property type="entry name" value="CTPS_N"/>
    <property type="match status" value="1"/>
</dbReference>
<dbReference type="CDD" id="cd01746">
    <property type="entry name" value="GATase1_CTP_Synthase"/>
    <property type="match status" value="1"/>
</dbReference>
<dbReference type="FunFam" id="3.40.50.300:FF:000009">
    <property type="entry name" value="CTP synthase"/>
    <property type="match status" value="1"/>
</dbReference>
<dbReference type="FunFam" id="3.40.50.880:FF:000002">
    <property type="entry name" value="CTP synthase"/>
    <property type="match status" value="1"/>
</dbReference>
<dbReference type="Gene3D" id="3.40.50.880">
    <property type="match status" value="1"/>
</dbReference>
<dbReference type="Gene3D" id="3.40.50.300">
    <property type="entry name" value="P-loop containing nucleotide triphosphate hydrolases"/>
    <property type="match status" value="1"/>
</dbReference>
<dbReference type="HAMAP" id="MF_01227">
    <property type="entry name" value="PyrG"/>
    <property type="match status" value="1"/>
</dbReference>
<dbReference type="InterPro" id="IPR029062">
    <property type="entry name" value="Class_I_gatase-like"/>
</dbReference>
<dbReference type="InterPro" id="IPR004468">
    <property type="entry name" value="CTP_synthase"/>
</dbReference>
<dbReference type="InterPro" id="IPR017456">
    <property type="entry name" value="CTP_synthase_N"/>
</dbReference>
<dbReference type="InterPro" id="IPR017926">
    <property type="entry name" value="GATASE"/>
</dbReference>
<dbReference type="InterPro" id="IPR033828">
    <property type="entry name" value="GATase1_CTP_Synthase"/>
</dbReference>
<dbReference type="InterPro" id="IPR027417">
    <property type="entry name" value="P-loop_NTPase"/>
</dbReference>
<dbReference type="NCBIfam" id="NF003792">
    <property type="entry name" value="PRK05380.1"/>
    <property type="match status" value="1"/>
</dbReference>
<dbReference type="NCBIfam" id="TIGR00337">
    <property type="entry name" value="PyrG"/>
    <property type="match status" value="1"/>
</dbReference>
<dbReference type="PANTHER" id="PTHR11550">
    <property type="entry name" value="CTP SYNTHASE"/>
    <property type="match status" value="1"/>
</dbReference>
<dbReference type="PANTHER" id="PTHR11550:SF0">
    <property type="entry name" value="CTP SYNTHASE-RELATED"/>
    <property type="match status" value="1"/>
</dbReference>
<dbReference type="Pfam" id="PF06418">
    <property type="entry name" value="CTP_synth_N"/>
    <property type="match status" value="1"/>
</dbReference>
<dbReference type="Pfam" id="PF00117">
    <property type="entry name" value="GATase"/>
    <property type="match status" value="1"/>
</dbReference>
<dbReference type="SUPFAM" id="SSF52317">
    <property type="entry name" value="Class I glutamine amidotransferase-like"/>
    <property type="match status" value="1"/>
</dbReference>
<dbReference type="SUPFAM" id="SSF52540">
    <property type="entry name" value="P-loop containing nucleoside triphosphate hydrolases"/>
    <property type="match status" value="1"/>
</dbReference>
<dbReference type="PROSITE" id="PS51273">
    <property type="entry name" value="GATASE_TYPE_1"/>
    <property type="match status" value="1"/>
</dbReference>
<accession>Q3BUT3</accession>
<proteinExistence type="inferred from homology"/>
<comment type="function">
    <text evidence="1">Catalyzes the ATP-dependent amination of UTP to CTP with either L-glutamine or ammonia as the source of nitrogen. Regulates intracellular CTP levels through interactions with the four ribonucleotide triphosphates.</text>
</comment>
<comment type="catalytic activity">
    <reaction evidence="1">
        <text>UTP + L-glutamine + ATP + H2O = CTP + L-glutamate + ADP + phosphate + 2 H(+)</text>
        <dbReference type="Rhea" id="RHEA:26426"/>
        <dbReference type="ChEBI" id="CHEBI:15377"/>
        <dbReference type="ChEBI" id="CHEBI:15378"/>
        <dbReference type="ChEBI" id="CHEBI:29985"/>
        <dbReference type="ChEBI" id="CHEBI:30616"/>
        <dbReference type="ChEBI" id="CHEBI:37563"/>
        <dbReference type="ChEBI" id="CHEBI:43474"/>
        <dbReference type="ChEBI" id="CHEBI:46398"/>
        <dbReference type="ChEBI" id="CHEBI:58359"/>
        <dbReference type="ChEBI" id="CHEBI:456216"/>
        <dbReference type="EC" id="6.3.4.2"/>
    </reaction>
</comment>
<comment type="catalytic activity">
    <reaction evidence="1">
        <text>L-glutamine + H2O = L-glutamate + NH4(+)</text>
        <dbReference type="Rhea" id="RHEA:15889"/>
        <dbReference type="ChEBI" id="CHEBI:15377"/>
        <dbReference type="ChEBI" id="CHEBI:28938"/>
        <dbReference type="ChEBI" id="CHEBI:29985"/>
        <dbReference type="ChEBI" id="CHEBI:58359"/>
    </reaction>
</comment>
<comment type="catalytic activity">
    <reaction evidence="1">
        <text>UTP + NH4(+) + ATP = CTP + ADP + phosphate + 2 H(+)</text>
        <dbReference type="Rhea" id="RHEA:16597"/>
        <dbReference type="ChEBI" id="CHEBI:15378"/>
        <dbReference type="ChEBI" id="CHEBI:28938"/>
        <dbReference type="ChEBI" id="CHEBI:30616"/>
        <dbReference type="ChEBI" id="CHEBI:37563"/>
        <dbReference type="ChEBI" id="CHEBI:43474"/>
        <dbReference type="ChEBI" id="CHEBI:46398"/>
        <dbReference type="ChEBI" id="CHEBI:456216"/>
    </reaction>
</comment>
<comment type="activity regulation">
    <text evidence="1">Allosterically activated by GTP, when glutamine is the substrate; GTP has no effect on the reaction when ammonia is the substrate. The allosteric effector GTP functions by stabilizing the protein conformation that binds the tetrahedral intermediate(s) formed during glutamine hydrolysis. Inhibited by the product CTP, via allosteric rather than competitive inhibition.</text>
</comment>
<comment type="pathway">
    <text evidence="1">Pyrimidine metabolism; CTP biosynthesis via de novo pathway; CTP from UDP: step 2/2.</text>
</comment>
<comment type="subunit">
    <text evidence="1">Homotetramer.</text>
</comment>
<comment type="miscellaneous">
    <text evidence="1">CTPSs have evolved a hybrid strategy for distinguishing between UTP and CTP. The overlapping regions of the product feedback inhibitory and substrate sites recognize a common feature in both compounds, the triphosphate moiety. To differentiate isosteric substrate and product pyrimidine rings, an additional pocket far from the expected kinase/ligase catalytic site, specifically recognizes the cytosine and ribose portions of the product inhibitor.</text>
</comment>
<comment type="similarity">
    <text evidence="1">Belongs to the CTP synthase family.</text>
</comment>
<protein>
    <recommendedName>
        <fullName evidence="1">CTP synthase</fullName>
        <ecNumber evidence="1">6.3.4.2</ecNumber>
    </recommendedName>
    <alternativeName>
        <fullName evidence="1">Cytidine 5'-triphosphate synthase</fullName>
    </alternativeName>
    <alternativeName>
        <fullName evidence="1">Cytidine triphosphate synthetase</fullName>
        <shortName evidence="1">CTP synthetase</shortName>
        <shortName evidence="1">CTPS</shortName>
    </alternativeName>
    <alternativeName>
        <fullName evidence="1">UTP--ammonia ligase</fullName>
    </alternativeName>
</protein>
<feature type="chain" id="PRO_0000266264" description="CTP synthase">
    <location>
        <begin position="1"/>
        <end position="554"/>
    </location>
</feature>
<feature type="domain" description="Glutamine amidotransferase type-1" evidence="1">
    <location>
        <begin position="292"/>
        <end position="545"/>
    </location>
</feature>
<feature type="region of interest" description="Amidoligase domain" evidence="1">
    <location>
        <begin position="1"/>
        <end position="265"/>
    </location>
</feature>
<feature type="active site" description="Nucleophile; for glutamine hydrolysis" evidence="1">
    <location>
        <position position="380"/>
    </location>
</feature>
<feature type="active site" evidence="1">
    <location>
        <position position="518"/>
    </location>
</feature>
<feature type="active site" evidence="1">
    <location>
        <position position="520"/>
    </location>
</feature>
<feature type="binding site" evidence="1">
    <location>
        <position position="13"/>
    </location>
    <ligand>
        <name>CTP</name>
        <dbReference type="ChEBI" id="CHEBI:37563"/>
        <note>allosteric inhibitor</note>
    </ligand>
</feature>
<feature type="binding site" evidence="1">
    <location>
        <position position="13"/>
    </location>
    <ligand>
        <name>UTP</name>
        <dbReference type="ChEBI" id="CHEBI:46398"/>
    </ligand>
</feature>
<feature type="binding site" evidence="1">
    <location>
        <begin position="14"/>
        <end position="19"/>
    </location>
    <ligand>
        <name>ATP</name>
        <dbReference type="ChEBI" id="CHEBI:30616"/>
    </ligand>
</feature>
<feature type="binding site" evidence="1">
    <location>
        <position position="71"/>
    </location>
    <ligand>
        <name>ATP</name>
        <dbReference type="ChEBI" id="CHEBI:30616"/>
    </ligand>
</feature>
<feature type="binding site" evidence="1">
    <location>
        <position position="71"/>
    </location>
    <ligand>
        <name>Mg(2+)</name>
        <dbReference type="ChEBI" id="CHEBI:18420"/>
    </ligand>
</feature>
<feature type="binding site" evidence="1">
    <location>
        <position position="139"/>
    </location>
    <ligand>
        <name>Mg(2+)</name>
        <dbReference type="ChEBI" id="CHEBI:18420"/>
    </ligand>
</feature>
<feature type="binding site" evidence="1">
    <location>
        <begin position="146"/>
        <end position="148"/>
    </location>
    <ligand>
        <name>CTP</name>
        <dbReference type="ChEBI" id="CHEBI:37563"/>
        <note>allosteric inhibitor</note>
    </ligand>
</feature>
<feature type="binding site" evidence="1">
    <location>
        <begin position="186"/>
        <end position="191"/>
    </location>
    <ligand>
        <name>CTP</name>
        <dbReference type="ChEBI" id="CHEBI:37563"/>
        <note>allosteric inhibitor</note>
    </ligand>
</feature>
<feature type="binding site" evidence="1">
    <location>
        <begin position="186"/>
        <end position="191"/>
    </location>
    <ligand>
        <name>UTP</name>
        <dbReference type="ChEBI" id="CHEBI:46398"/>
    </ligand>
</feature>
<feature type="binding site" evidence="1">
    <location>
        <position position="222"/>
    </location>
    <ligand>
        <name>CTP</name>
        <dbReference type="ChEBI" id="CHEBI:37563"/>
        <note>allosteric inhibitor</note>
    </ligand>
</feature>
<feature type="binding site" evidence="1">
    <location>
        <position position="222"/>
    </location>
    <ligand>
        <name>UTP</name>
        <dbReference type="ChEBI" id="CHEBI:46398"/>
    </ligand>
</feature>
<feature type="binding site" evidence="1">
    <location>
        <position position="353"/>
    </location>
    <ligand>
        <name>L-glutamine</name>
        <dbReference type="ChEBI" id="CHEBI:58359"/>
    </ligand>
</feature>
<feature type="binding site" evidence="1">
    <location>
        <begin position="381"/>
        <end position="384"/>
    </location>
    <ligand>
        <name>L-glutamine</name>
        <dbReference type="ChEBI" id="CHEBI:58359"/>
    </ligand>
</feature>
<feature type="binding site" evidence="1">
    <location>
        <position position="404"/>
    </location>
    <ligand>
        <name>L-glutamine</name>
        <dbReference type="ChEBI" id="CHEBI:58359"/>
    </ligand>
</feature>
<feature type="binding site" evidence="1">
    <location>
        <position position="471"/>
    </location>
    <ligand>
        <name>L-glutamine</name>
        <dbReference type="ChEBI" id="CHEBI:58359"/>
    </ligand>
</feature>
<name>PYRG_XANE5</name>
<evidence type="ECO:0000255" key="1">
    <source>
        <dbReference type="HAMAP-Rule" id="MF_01227"/>
    </source>
</evidence>
<sequence>MTPLIFVTGGVVSSLGKGIAAASLASILEARGLKVTMMKLDPYINVDPGTMSPFQHGEVYVTDDGAETDLDLGHYERYVRTRLSRKNSVTTGRIYENVIRKERRGDYLGATVQVIPHITDEIRRCIDEATAGFDVALIEIGGTVGDIESLPFLEAIRQVRTERGAEKAMFMHLTLVPYIAAAGELKTKPTQHSVKELRSIGIQPDVLLCRSEQAVPDSERRKIALFTNVSERAVISCPDIDVLYGMPLELLRQGLDELVIEQFKLRDKVAAADLSEWAAVVDAVKHPLDEVNIAVVGKYVDHQDAYKSVAEALRHGGLRQRTKVNLKWLEAQDLEGSDMSALQDIDGILVPGGFGDRGFEGKVQTSKFAREHKVPYFGICYGMQAAVVDYARHVADLDAANSTENDRQSPHPVIGLITEWRTATGEVEKRDEKSDLGGTMRLGLQEQRLKPGTLAREVYGKDVVAERHRHRYEFNNRYRTQLEDAGLVISGKSMDDTLVEVVELPRDMHPWFLACQAHPEFLSTPRDGHPLFIGFVRAAREKKAGGKLLKEARA</sequence>
<keyword id="KW-0067">ATP-binding</keyword>
<keyword id="KW-0315">Glutamine amidotransferase</keyword>
<keyword id="KW-0436">Ligase</keyword>
<keyword id="KW-0460">Magnesium</keyword>
<keyword id="KW-0479">Metal-binding</keyword>
<keyword id="KW-0547">Nucleotide-binding</keyword>
<keyword id="KW-0665">Pyrimidine biosynthesis</keyword>
<reference key="1">
    <citation type="journal article" date="2005" name="J. Bacteriol.">
        <title>Insights into genome plasticity and pathogenicity of the plant pathogenic Bacterium Xanthomonas campestris pv. vesicatoria revealed by the complete genome sequence.</title>
        <authorList>
            <person name="Thieme F."/>
            <person name="Koebnik R."/>
            <person name="Bekel T."/>
            <person name="Berger C."/>
            <person name="Boch J."/>
            <person name="Buettner D."/>
            <person name="Caldana C."/>
            <person name="Gaigalat L."/>
            <person name="Goesmann A."/>
            <person name="Kay S."/>
            <person name="Kirchner O."/>
            <person name="Lanz C."/>
            <person name="Linke B."/>
            <person name="McHardy A.C."/>
            <person name="Meyer F."/>
            <person name="Mittenhuber G."/>
            <person name="Nies D.H."/>
            <person name="Niesbach-Kloesgen U."/>
            <person name="Patschkowski T."/>
            <person name="Rueckert C."/>
            <person name="Rupp O."/>
            <person name="Schneiker S."/>
            <person name="Schuster S.C."/>
            <person name="Vorhoelter F.J."/>
            <person name="Weber E."/>
            <person name="Puehler A."/>
            <person name="Bonas U."/>
            <person name="Bartels D."/>
            <person name="Kaiser O."/>
        </authorList>
    </citation>
    <scope>NUCLEOTIDE SEQUENCE [LARGE SCALE GENOMIC DNA]</scope>
    <source>
        <strain>85-10</strain>
    </source>
</reference>
<gene>
    <name evidence="1" type="primary">pyrG</name>
    <name type="ordered locus">XCV1749</name>
</gene>
<organism>
    <name type="scientific">Xanthomonas euvesicatoria pv. vesicatoria (strain 85-10)</name>
    <name type="common">Xanthomonas campestris pv. vesicatoria</name>
    <dbReference type="NCBI Taxonomy" id="316273"/>
    <lineage>
        <taxon>Bacteria</taxon>
        <taxon>Pseudomonadati</taxon>
        <taxon>Pseudomonadota</taxon>
        <taxon>Gammaproteobacteria</taxon>
        <taxon>Lysobacterales</taxon>
        <taxon>Lysobacteraceae</taxon>
        <taxon>Xanthomonas</taxon>
    </lineage>
</organism>